<keyword id="KW-1185">Reference proteome</keyword>
<keyword id="KW-0687">Ribonucleoprotein</keyword>
<keyword id="KW-0689">Ribosomal protein</keyword>
<keyword id="KW-0694">RNA-binding</keyword>
<keyword id="KW-0699">rRNA-binding</keyword>
<keyword id="KW-0820">tRNA-binding</keyword>
<protein>
    <recommendedName>
        <fullName evidence="1">Large ribosomal subunit protein uL16</fullName>
    </recommendedName>
    <alternativeName>
        <fullName evidence="2">50S ribosomal protein L16</fullName>
    </alternativeName>
</protein>
<reference key="1">
    <citation type="journal article" date="2004" name="Science">
        <title>A predator unmasked: life cycle of Bdellovibrio bacteriovorus from a genomic perspective.</title>
        <authorList>
            <person name="Rendulic S."/>
            <person name="Jagtap P."/>
            <person name="Rosinus A."/>
            <person name="Eppinger M."/>
            <person name="Baar C."/>
            <person name="Lanz C."/>
            <person name="Keller H."/>
            <person name="Lambert C."/>
            <person name="Evans K.J."/>
            <person name="Goesmann A."/>
            <person name="Meyer F."/>
            <person name="Sockett R.E."/>
            <person name="Schuster S.C."/>
        </authorList>
    </citation>
    <scope>NUCLEOTIDE SEQUENCE [LARGE SCALE GENOMIC DNA]</scope>
    <source>
        <strain>ATCC 15356 / DSM 50701 / NCIMB 9529 / HD100</strain>
    </source>
</reference>
<accession>Q6MJ21</accession>
<proteinExistence type="inferred from homology"/>
<sequence length="135" mass="15210">MLSPKRVKWRKQFVGRATGFAVRGANLDFGDYGLQAVEEGRLTARQLEAGRIAISRSVKRGGKIWCRVFPNIPVTKKPAETRMGSGKGNPELWVARVLPGKVLFEMNGVTREQAKEAFERAAHKLPFKTRFLVRE</sequence>
<evidence type="ECO:0000255" key="1">
    <source>
        <dbReference type="HAMAP-Rule" id="MF_01342"/>
    </source>
</evidence>
<evidence type="ECO:0000305" key="2"/>
<dbReference type="EMBL" id="BX842654">
    <property type="protein sequence ID" value="CAE80741.1"/>
    <property type="molecule type" value="Genomic_DNA"/>
</dbReference>
<dbReference type="RefSeq" id="WP_011165345.1">
    <property type="nucleotide sequence ID" value="NC_005363.1"/>
</dbReference>
<dbReference type="SMR" id="Q6MJ21"/>
<dbReference type="STRING" id="264462.Bd2969"/>
<dbReference type="GeneID" id="93013832"/>
<dbReference type="KEGG" id="bba:Bd2969"/>
<dbReference type="eggNOG" id="COG0197">
    <property type="taxonomic scope" value="Bacteria"/>
</dbReference>
<dbReference type="HOGENOM" id="CLU_078858_2_1_7"/>
<dbReference type="Proteomes" id="UP000008080">
    <property type="component" value="Chromosome"/>
</dbReference>
<dbReference type="GO" id="GO:0022625">
    <property type="term" value="C:cytosolic large ribosomal subunit"/>
    <property type="evidence" value="ECO:0007669"/>
    <property type="project" value="TreeGrafter"/>
</dbReference>
<dbReference type="GO" id="GO:0019843">
    <property type="term" value="F:rRNA binding"/>
    <property type="evidence" value="ECO:0007669"/>
    <property type="project" value="UniProtKB-UniRule"/>
</dbReference>
<dbReference type="GO" id="GO:0003735">
    <property type="term" value="F:structural constituent of ribosome"/>
    <property type="evidence" value="ECO:0007669"/>
    <property type="project" value="InterPro"/>
</dbReference>
<dbReference type="GO" id="GO:0000049">
    <property type="term" value="F:tRNA binding"/>
    <property type="evidence" value="ECO:0007669"/>
    <property type="project" value="UniProtKB-KW"/>
</dbReference>
<dbReference type="GO" id="GO:0006412">
    <property type="term" value="P:translation"/>
    <property type="evidence" value="ECO:0007669"/>
    <property type="project" value="UniProtKB-UniRule"/>
</dbReference>
<dbReference type="CDD" id="cd01433">
    <property type="entry name" value="Ribosomal_L16_L10e"/>
    <property type="match status" value="1"/>
</dbReference>
<dbReference type="FunFam" id="3.90.1170.10:FF:000001">
    <property type="entry name" value="50S ribosomal protein L16"/>
    <property type="match status" value="1"/>
</dbReference>
<dbReference type="Gene3D" id="3.90.1170.10">
    <property type="entry name" value="Ribosomal protein L10e/L16"/>
    <property type="match status" value="1"/>
</dbReference>
<dbReference type="HAMAP" id="MF_01342">
    <property type="entry name" value="Ribosomal_uL16"/>
    <property type="match status" value="1"/>
</dbReference>
<dbReference type="InterPro" id="IPR047873">
    <property type="entry name" value="Ribosomal_uL16"/>
</dbReference>
<dbReference type="InterPro" id="IPR000114">
    <property type="entry name" value="Ribosomal_uL16_bact-type"/>
</dbReference>
<dbReference type="InterPro" id="IPR020798">
    <property type="entry name" value="Ribosomal_uL16_CS"/>
</dbReference>
<dbReference type="InterPro" id="IPR016180">
    <property type="entry name" value="Ribosomal_uL16_dom"/>
</dbReference>
<dbReference type="InterPro" id="IPR036920">
    <property type="entry name" value="Ribosomal_uL16_sf"/>
</dbReference>
<dbReference type="NCBIfam" id="TIGR01164">
    <property type="entry name" value="rplP_bact"/>
    <property type="match status" value="1"/>
</dbReference>
<dbReference type="PANTHER" id="PTHR12220">
    <property type="entry name" value="50S/60S RIBOSOMAL PROTEIN L16"/>
    <property type="match status" value="1"/>
</dbReference>
<dbReference type="PANTHER" id="PTHR12220:SF13">
    <property type="entry name" value="LARGE RIBOSOMAL SUBUNIT PROTEIN UL16M"/>
    <property type="match status" value="1"/>
</dbReference>
<dbReference type="Pfam" id="PF00252">
    <property type="entry name" value="Ribosomal_L16"/>
    <property type="match status" value="1"/>
</dbReference>
<dbReference type="PRINTS" id="PR00060">
    <property type="entry name" value="RIBOSOMALL16"/>
</dbReference>
<dbReference type="SUPFAM" id="SSF54686">
    <property type="entry name" value="Ribosomal protein L16p/L10e"/>
    <property type="match status" value="1"/>
</dbReference>
<dbReference type="PROSITE" id="PS00701">
    <property type="entry name" value="RIBOSOMAL_L16_2"/>
    <property type="match status" value="1"/>
</dbReference>
<gene>
    <name evidence="1" type="primary">rplP</name>
    <name type="ordered locus">Bd2969</name>
</gene>
<feature type="chain" id="PRO_0000062050" description="Large ribosomal subunit protein uL16">
    <location>
        <begin position="1"/>
        <end position="135"/>
    </location>
</feature>
<organism>
    <name type="scientific">Bdellovibrio bacteriovorus (strain ATCC 15356 / DSM 50701 / NCIMB 9529 / HD100)</name>
    <dbReference type="NCBI Taxonomy" id="264462"/>
    <lineage>
        <taxon>Bacteria</taxon>
        <taxon>Pseudomonadati</taxon>
        <taxon>Bdellovibrionota</taxon>
        <taxon>Bdellovibrionia</taxon>
        <taxon>Bdellovibrionales</taxon>
        <taxon>Pseudobdellovibrionaceae</taxon>
        <taxon>Bdellovibrio</taxon>
    </lineage>
</organism>
<comment type="function">
    <text evidence="1">Binds 23S rRNA and is also seen to make contacts with the A and possibly P site tRNAs.</text>
</comment>
<comment type="subunit">
    <text evidence="1">Part of the 50S ribosomal subunit.</text>
</comment>
<comment type="similarity">
    <text evidence="1">Belongs to the universal ribosomal protein uL16 family.</text>
</comment>
<name>RL16_BDEBA</name>